<proteinExistence type="predicted"/>
<reference key="1">
    <citation type="journal article" date="1990" name="Virology">
        <title>The complete DNA sequence of vaccinia virus.</title>
        <authorList>
            <person name="Goebel S.J."/>
            <person name="Johnson G.P."/>
            <person name="Perkus M.E."/>
            <person name="Davis S.W."/>
            <person name="Winslow J.P."/>
            <person name="Paoletti E."/>
        </authorList>
    </citation>
    <scope>NUCLEOTIDE SEQUENCE [LARGE SCALE GENOMIC DNA]</scope>
</reference>
<reference key="2">
    <citation type="journal article" date="1990" name="Virology">
        <title>Appendix to 'The complete DNA sequence of vaccinia virus'.</title>
        <authorList>
            <person name="Goebel S.J."/>
            <person name="Johnson G.P."/>
            <person name="Perkus M.E."/>
            <person name="Davis S.W."/>
            <person name="Winslow J.P."/>
            <person name="Paoletti E."/>
        </authorList>
    </citation>
    <scope>COMPLETE GENOME</scope>
</reference>
<name>YVBG_VACCC</name>
<keyword id="KW-1185">Reference proteome</keyword>
<dbReference type="EMBL" id="M35027">
    <property type="protein sequence ID" value="AAA48224.1"/>
    <property type="molecule type" value="Genomic_DNA"/>
</dbReference>
<dbReference type="EMBL" id="M35027">
    <property type="protein sequence ID" value="AAA47977.1"/>
    <property type="molecule type" value="Genomic_DNA"/>
</dbReference>
<dbReference type="PIR" id="C33172">
    <property type="entry name" value="C33172"/>
</dbReference>
<dbReference type="Proteomes" id="UP000008269">
    <property type="component" value="Segment"/>
</dbReference>
<dbReference type="InterPro" id="IPR020077">
    <property type="entry name" value="DUF5436"/>
</dbReference>
<dbReference type="Pfam" id="PF17504">
    <property type="entry name" value="DUF5436"/>
    <property type="match status" value="1"/>
</dbReference>
<gene>
    <name type="ORF">B ORF G</name>
</gene>
<gene>
    <name type="ORF">C ORF F</name>
</gene>
<accession>P20547</accession>
<sequence length="91" mass="11195">MRRCIHIKERKIHMTNIVDRNVTFILTVVHKYVRYVPHTVANDAHNLVHLAHLIHFIIYFFIIRDVRKKKKKKKKNRTIYFFSNVYARHIK</sequence>
<protein>
    <recommendedName>
        <fullName>Uncharacterized 11.2 kDa protein</fullName>
    </recommendedName>
</protein>
<organism>
    <name type="scientific">Vaccinia virus (strain Copenhagen)</name>
    <name type="common">VACV</name>
    <dbReference type="NCBI Taxonomy" id="10249"/>
    <lineage>
        <taxon>Viruses</taxon>
        <taxon>Varidnaviria</taxon>
        <taxon>Bamfordvirae</taxon>
        <taxon>Nucleocytoviricota</taxon>
        <taxon>Pokkesviricetes</taxon>
        <taxon>Chitovirales</taxon>
        <taxon>Poxviridae</taxon>
        <taxon>Chordopoxvirinae</taxon>
        <taxon>Orthopoxvirus</taxon>
        <taxon>Vaccinia virus</taxon>
    </lineage>
</organism>
<organismHost>
    <name type="scientific">Homo sapiens</name>
    <name type="common">Human</name>
    <dbReference type="NCBI Taxonomy" id="9606"/>
</organismHost>
<feature type="chain" id="PRO_0000099676" description="Uncharacterized 11.2 kDa protein">
    <location>
        <begin position="1"/>
        <end position="91"/>
    </location>
</feature>